<accession>A4XJS3</accession>
<name>RUVB_CALS8</name>
<keyword id="KW-0067">ATP-binding</keyword>
<keyword id="KW-0963">Cytoplasm</keyword>
<keyword id="KW-0227">DNA damage</keyword>
<keyword id="KW-0233">DNA recombination</keyword>
<keyword id="KW-0234">DNA repair</keyword>
<keyword id="KW-0238">DNA-binding</keyword>
<keyword id="KW-0378">Hydrolase</keyword>
<keyword id="KW-0547">Nucleotide-binding</keyword>
<comment type="function">
    <text evidence="1">The RuvA-RuvB-RuvC complex processes Holliday junction (HJ) DNA during genetic recombination and DNA repair, while the RuvA-RuvB complex plays an important role in the rescue of blocked DNA replication forks via replication fork reversal (RFR). RuvA specifically binds to HJ cruciform DNA, conferring on it an open structure. The RuvB hexamer acts as an ATP-dependent pump, pulling dsDNA into and through the RuvAB complex. RuvB forms 2 homohexamers on either side of HJ DNA bound by 1 or 2 RuvA tetramers; 4 subunits per hexamer contact DNA at a time. Coordinated motions by a converter formed by DNA-disengaged RuvB subunits stimulates ATP hydrolysis and nucleotide exchange. Immobilization of the converter enables RuvB to convert the ATP-contained energy into a lever motion, pulling 2 nucleotides of DNA out of the RuvA tetramer per ATP hydrolyzed, thus driving DNA branch migration. The RuvB motors rotate together with the DNA substrate, which together with the progressing nucleotide cycle form the mechanistic basis for DNA recombination by continuous HJ branch migration. Branch migration allows RuvC to scan DNA until it finds its consensus sequence, where it cleaves and resolves cruciform DNA.</text>
</comment>
<comment type="catalytic activity">
    <reaction evidence="1">
        <text>ATP + H2O = ADP + phosphate + H(+)</text>
        <dbReference type="Rhea" id="RHEA:13065"/>
        <dbReference type="ChEBI" id="CHEBI:15377"/>
        <dbReference type="ChEBI" id="CHEBI:15378"/>
        <dbReference type="ChEBI" id="CHEBI:30616"/>
        <dbReference type="ChEBI" id="CHEBI:43474"/>
        <dbReference type="ChEBI" id="CHEBI:456216"/>
    </reaction>
</comment>
<comment type="subunit">
    <text evidence="1">Homohexamer. Forms an RuvA(8)-RuvB(12)-Holliday junction (HJ) complex. HJ DNA is sandwiched between 2 RuvA tetramers; dsDNA enters through RuvA and exits via RuvB. An RuvB hexamer assembles on each DNA strand where it exits the tetramer. Each RuvB hexamer is contacted by two RuvA subunits (via domain III) on 2 adjacent RuvB subunits; this complex drives branch migration. In the full resolvosome a probable DNA-RuvA(4)-RuvB(12)-RuvC(2) complex forms which resolves the HJ.</text>
</comment>
<comment type="subcellular location">
    <subcellularLocation>
        <location evidence="1">Cytoplasm</location>
    </subcellularLocation>
</comment>
<comment type="domain">
    <text evidence="1">Has 3 domains, the large (RuvB-L) and small ATPase (RuvB-S) domains and the C-terminal head (RuvB-H) domain. The head domain binds DNA, while the ATPase domains jointly bind ATP, ADP or are empty depending on the state of the subunit in the translocation cycle. During a single DNA translocation step the structure of each domain remains the same, but their relative positions change.</text>
</comment>
<comment type="similarity">
    <text evidence="1">Belongs to the RuvB family.</text>
</comment>
<gene>
    <name evidence="1" type="primary">ruvB</name>
    <name type="ordered locus">Csac_1566</name>
</gene>
<protein>
    <recommendedName>
        <fullName evidence="1">Holliday junction branch migration complex subunit RuvB</fullName>
        <ecNumber evidence="1">3.6.4.-</ecNumber>
    </recommendedName>
</protein>
<proteinExistence type="inferred from homology"/>
<evidence type="ECO:0000255" key="1">
    <source>
        <dbReference type="HAMAP-Rule" id="MF_00016"/>
    </source>
</evidence>
<reference key="1">
    <citation type="submission" date="2007-04" db="EMBL/GenBank/DDBJ databases">
        <title>Genome sequence of the thermophilic hydrogen-producing bacterium Caldicellulosiruptor saccharolyticus DSM 8903.</title>
        <authorList>
            <person name="Copeland A."/>
            <person name="Lucas S."/>
            <person name="Lapidus A."/>
            <person name="Barry K."/>
            <person name="Detter J.C."/>
            <person name="Glavina del Rio T."/>
            <person name="Hammon N."/>
            <person name="Israni S."/>
            <person name="Dalin E."/>
            <person name="Tice H."/>
            <person name="Pitluck S."/>
            <person name="Kiss H."/>
            <person name="Brettin T."/>
            <person name="Bruce D."/>
            <person name="Han C."/>
            <person name="Schmutz J."/>
            <person name="Larimer F."/>
            <person name="Land M."/>
            <person name="Hauser L."/>
            <person name="Kyrpides N."/>
            <person name="Lykidis A."/>
            <person name="van de Werken H.J.G."/>
            <person name="Verhaart M.R.A."/>
            <person name="VanFossen A.L."/>
            <person name="Lewis D.L."/>
            <person name="Nichols J.D."/>
            <person name="Goorissen H.P."/>
            <person name="van Niel E.W.J."/>
            <person name="Stams F.J.M."/>
            <person name="Willquist K.U."/>
            <person name="Ward D.E."/>
            <person name="van der Oost J."/>
            <person name="Kelly R.M."/>
            <person name="Kengen S.M.W."/>
            <person name="Richardson P."/>
        </authorList>
    </citation>
    <scope>NUCLEOTIDE SEQUENCE [LARGE SCALE GENOMIC DNA]</scope>
    <source>
        <strain>ATCC 43494 / DSM 8903 / Tp8T 6331</strain>
    </source>
</reference>
<organism>
    <name type="scientific">Caldicellulosiruptor saccharolyticus (strain ATCC 43494 / DSM 8903 / Tp8T 6331)</name>
    <dbReference type="NCBI Taxonomy" id="351627"/>
    <lineage>
        <taxon>Bacteria</taxon>
        <taxon>Bacillati</taxon>
        <taxon>Bacillota</taxon>
        <taxon>Bacillota incertae sedis</taxon>
        <taxon>Caldicellulosiruptorales</taxon>
        <taxon>Caldicellulosiruptoraceae</taxon>
        <taxon>Caldicellulosiruptor</taxon>
    </lineage>
</organism>
<feature type="chain" id="PRO_1000001378" description="Holliday junction branch migration complex subunit RuvB">
    <location>
        <begin position="1"/>
        <end position="338"/>
    </location>
</feature>
<feature type="region of interest" description="Large ATPase domain (RuvB-L)" evidence="1">
    <location>
        <begin position="1"/>
        <end position="180"/>
    </location>
</feature>
<feature type="region of interest" description="Small ATPAse domain (RuvB-S)" evidence="1">
    <location>
        <begin position="181"/>
        <end position="251"/>
    </location>
</feature>
<feature type="region of interest" description="Head domain (RuvB-H)" evidence="1">
    <location>
        <begin position="254"/>
        <end position="338"/>
    </location>
</feature>
<feature type="binding site" evidence="1">
    <location>
        <position position="19"/>
    </location>
    <ligand>
        <name>ATP</name>
        <dbReference type="ChEBI" id="CHEBI:30616"/>
    </ligand>
</feature>
<feature type="binding site" evidence="1">
    <location>
        <position position="20"/>
    </location>
    <ligand>
        <name>ATP</name>
        <dbReference type="ChEBI" id="CHEBI:30616"/>
    </ligand>
</feature>
<feature type="binding site" evidence="1">
    <location>
        <position position="61"/>
    </location>
    <ligand>
        <name>ATP</name>
        <dbReference type="ChEBI" id="CHEBI:30616"/>
    </ligand>
</feature>
<feature type="binding site" evidence="1">
    <location>
        <position position="64"/>
    </location>
    <ligand>
        <name>ATP</name>
        <dbReference type="ChEBI" id="CHEBI:30616"/>
    </ligand>
</feature>
<feature type="binding site" evidence="1">
    <location>
        <position position="65"/>
    </location>
    <ligand>
        <name>ATP</name>
        <dbReference type="ChEBI" id="CHEBI:30616"/>
    </ligand>
</feature>
<feature type="binding site" evidence="1">
    <location>
        <position position="65"/>
    </location>
    <ligand>
        <name>Mg(2+)</name>
        <dbReference type="ChEBI" id="CHEBI:18420"/>
    </ligand>
</feature>
<feature type="binding site" evidence="1">
    <location>
        <position position="66"/>
    </location>
    <ligand>
        <name>ATP</name>
        <dbReference type="ChEBI" id="CHEBI:30616"/>
    </ligand>
</feature>
<feature type="binding site" evidence="1">
    <location>
        <position position="170"/>
    </location>
    <ligand>
        <name>ATP</name>
        <dbReference type="ChEBI" id="CHEBI:30616"/>
    </ligand>
</feature>
<feature type="binding site" evidence="1">
    <location>
        <position position="180"/>
    </location>
    <ligand>
        <name>ATP</name>
        <dbReference type="ChEBI" id="CHEBI:30616"/>
    </ligand>
</feature>
<feature type="binding site" evidence="1">
    <location>
        <position position="217"/>
    </location>
    <ligand>
        <name>ATP</name>
        <dbReference type="ChEBI" id="CHEBI:30616"/>
    </ligand>
</feature>
<feature type="binding site" evidence="1">
    <location>
        <position position="309"/>
    </location>
    <ligand>
        <name>DNA</name>
        <dbReference type="ChEBI" id="CHEBI:16991"/>
    </ligand>
</feature>
<feature type="binding site" evidence="1">
    <location>
        <position position="314"/>
    </location>
    <ligand>
        <name>DNA</name>
        <dbReference type="ChEBI" id="CHEBI:16991"/>
    </ligand>
</feature>
<sequence>MERLLDNKFSIEDVHEESLRPKTLEDYIGQQKVKEKIKIFIEAAKKRKEPLDHVLLYGPPGLGKTTLANIIANEMGVDIKVTSGPAIERAGDLVAILTNIGENNILFIDEIHRLNRTIEEVLYPAMEDKKVDIVIGKGPSAKTIRLTLPPFTLIGATTRAGLLSSPLRDRFGIIERLDYYTVEELSQIVMRSASILKCDIEKEACIEIAKRSRGTPRVANRLLRRLRDYAMVKHTGSITYEVAKSGLEMFEVDEYGLDLVDRNILEAIVYKFGGGPVGLSTIAAAIGEDEGTIEDIYEPYLIQEGFLVKTARGRVATQKAINHIAKIKFNVKESGDKR</sequence>
<dbReference type="EC" id="3.6.4.-" evidence="1"/>
<dbReference type="EMBL" id="CP000679">
    <property type="protein sequence ID" value="ABP67158.1"/>
    <property type="molecule type" value="Genomic_DNA"/>
</dbReference>
<dbReference type="RefSeq" id="WP_011917093.1">
    <property type="nucleotide sequence ID" value="NC_009437.1"/>
</dbReference>
<dbReference type="SMR" id="A4XJS3"/>
<dbReference type="STRING" id="351627.Csac_1566"/>
<dbReference type="KEGG" id="csc:Csac_1566"/>
<dbReference type="eggNOG" id="COG2255">
    <property type="taxonomic scope" value="Bacteria"/>
</dbReference>
<dbReference type="HOGENOM" id="CLU_055599_1_0_9"/>
<dbReference type="OrthoDB" id="9804478at2"/>
<dbReference type="Proteomes" id="UP000000256">
    <property type="component" value="Chromosome"/>
</dbReference>
<dbReference type="GO" id="GO:0005737">
    <property type="term" value="C:cytoplasm"/>
    <property type="evidence" value="ECO:0007669"/>
    <property type="project" value="UniProtKB-SubCell"/>
</dbReference>
<dbReference type="GO" id="GO:0048476">
    <property type="term" value="C:Holliday junction resolvase complex"/>
    <property type="evidence" value="ECO:0007669"/>
    <property type="project" value="UniProtKB-UniRule"/>
</dbReference>
<dbReference type="GO" id="GO:0005524">
    <property type="term" value="F:ATP binding"/>
    <property type="evidence" value="ECO:0007669"/>
    <property type="project" value="UniProtKB-UniRule"/>
</dbReference>
<dbReference type="GO" id="GO:0016887">
    <property type="term" value="F:ATP hydrolysis activity"/>
    <property type="evidence" value="ECO:0007669"/>
    <property type="project" value="InterPro"/>
</dbReference>
<dbReference type="GO" id="GO:0000400">
    <property type="term" value="F:four-way junction DNA binding"/>
    <property type="evidence" value="ECO:0007669"/>
    <property type="project" value="UniProtKB-UniRule"/>
</dbReference>
<dbReference type="GO" id="GO:0009378">
    <property type="term" value="F:four-way junction helicase activity"/>
    <property type="evidence" value="ECO:0007669"/>
    <property type="project" value="InterPro"/>
</dbReference>
<dbReference type="GO" id="GO:0006310">
    <property type="term" value="P:DNA recombination"/>
    <property type="evidence" value="ECO:0007669"/>
    <property type="project" value="UniProtKB-UniRule"/>
</dbReference>
<dbReference type="GO" id="GO:0006281">
    <property type="term" value="P:DNA repair"/>
    <property type="evidence" value="ECO:0007669"/>
    <property type="project" value="UniProtKB-UniRule"/>
</dbReference>
<dbReference type="CDD" id="cd00009">
    <property type="entry name" value="AAA"/>
    <property type="match status" value="1"/>
</dbReference>
<dbReference type="Gene3D" id="1.10.8.60">
    <property type="match status" value="1"/>
</dbReference>
<dbReference type="Gene3D" id="3.40.50.300">
    <property type="entry name" value="P-loop containing nucleotide triphosphate hydrolases"/>
    <property type="match status" value="1"/>
</dbReference>
<dbReference type="Gene3D" id="1.10.10.10">
    <property type="entry name" value="Winged helix-like DNA-binding domain superfamily/Winged helix DNA-binding domain"/>
    <property type="match status" value="1"/>
</dbReference>
<dbReference type="HAMAP" id="MF_00016">
    <property type="entry name" value="DNA_HJ_migration_RuvB"/>
    <property type="match status" value="1"/>
</dbReference>
<dbReference type="InterPro" id="IPR003593">
    <property type="entry name" value="AAA+_ATPase"/>
</dbReference>
<dbReference type="InterPro" id="IPR041445">
    <property type="entry name" value="AAA_lid_4"/>
</dbReference>
<dbReference type="InterPro" id="IPR004605">
    <property type="entry name" value="DNA_helicase_Holl-junc_RuvB"/>
</dbReference>
<dbReference type="InterPro" id="IPR027417">
    <property type="entry name" value="P-loop_NTPase"/>
</dbReference>
<dbReference type="InterPro" id="IPR008824">
    <property type="entry name" value="RuvB-like_N"/>
</dbReference>
<dbReference type="InterPro" id="IPR008823">
    <property type="entry name" value="RuvB_C"/>
</dbReference>
<dbReference type="InterPro" id="IPR036388">
    <property type="entry name" value="WH-like_DNA-bd_sf"/>
</dbReference>
<dbReference type="InterPro" id="IPR036390">
    <property type="entry name" value="WH_DNA-bd_sf"/>
</dbReference>
<dbReference type="NCBIfam" id="NF000868">
    <property type="entry name" value="PRK00080.1"/>
    <property type="match status" value="1"/>
</dbReference>
<dbReference type="NCBIfam" id="TIGR00635">
    <property type="entry name" value="ruvB"/>
    <property type="match status" value="1"/>
</dbReference>
<dbReference type="PANTHER" id="PTHR42848">
    <property type="match status" value="1"/>
</dbReference>
<dbReference type="PANTHER" id="PTHR42848:SF1">
    <property type="entry name" value="HOLLIDAY JUNCTION BRANCH MIGRATION COMPLEX SUBUNIT RUVB"/>
    <property type="match status" value="1"/>
</dbReference>
<dbReference type="Pfam" id="PF17864">
    <property type="entry name" value="AAA_lid_4"/>
    <property type="match status" value="1"/>
</dbReference>
<dbReference type="Pfam" id="PF05491">
    <property type="entry name" value="RuvB_C"/>
    <property type="match status" value="1"/>
</dbReference>
<dbReference type="Pfam" id="PF05496">
    <property type="entry name" value="RuvB_N"/>
    <property type="match status" value="1"/>
</dbReference>
<dbReference type="SMART" id="SM00382">
    <property type="entry name" value="AAA"/>
    <property type="match status" value="1"/>
</dbReference>
<dbReference type="SUPFAM" id="SSF52540">
    <property type="entry name" value="P-loop containing nucleoside triphosphate hydrolases"/>
    <property type="match status" value="1"/>
</dbReference>
<dbReference type="SUPFAM" id="SSF46785">
    <property type="entry name" value="Winged helix' DNA-binding domain"/>
    <property type="match status" value="1"/>
</dbReference>